<comment type="function">
    <text evidence="1">F(1)F(0) ATP synthase produces ATP from ADP in the presence of a proton or sodium gradient. F-type ATPases consist of two structural domains, F(1) containing the extramembraneous catalytic core and F(0) containing the membrane proton channel, linked together by a central stalk and a peripheral stalk. During catalysis, ATP synthesis in the catalytic domain of F(1) is coupled via a rotary mechanism of the central stalk subunits to proton translocation.</text>
</comment>
<comment type="function">
    <text evidence="1">Component of the F(0) channel, it forms part of the peripheral stalk, linking F(1) to F(0).</text>
</comment>
<comment type="subunit">
    <text evidence="1">F-type ATPases have 2 components, F(1) - the catalytic core - and F(0) - the membrane proton channel. F(1) has five subunits: alpha(3), beta(3), gamma(1), delta(1), epsilon(1). F(0) has three main subunits: a(1), b(2) and c(10-14). The alpha and beta chains form an alternating ring which encloses part of the gamma chain. F(1) is attached to F(0) by a central stalk formed by the gamma and epsilon chains, while a peripheral stalk is formed by the delta and b chains.</text>
</comment>
<comment type="subcellular location">
    <subcellularLocation>
        <location evidence="1">Cell inner membrane</location>
        <topology evidence="1">Single-pass membrane protein</topology>
    </subcellularLocation>
</comment>
<comment type="similarity">
    <text evidence="1">Belongs to the ATPase B chain family.</text>
</comment>
<sequence>MNINLTLFGQTIAFAIFVWFCMKFVWPPLTQAMQERQKKIAEGLDAAGRAERDLQLAQERAAQMLRETKEQAAEILDRANKTANAIVEEAKAQARSEGEKLIAGAKAEIDLEVNRAKDQLRAQVAALAVTGAEQILQSTVDGAAHNDLVAKLASQL</sequence>
<gene>
    <name evidence="1" type="primary">atpF</name>
    <name type="ordered locus">Pmen_4611</name>
</gene>
<reference key="1">
    <citation type="submission" date="2007-04" db="EMBL/GenBank/DDBJ databases">
        <title>Complete sequence of Pseudomonas mendocina ymp.</title>
        <authorList>
            <consortium name="US DOE Joint Genome Institute"/>
            <person name="Copeland A."/>
            <person name="Lucas S."/>
            <person name="Lapidus A."/>
            <person name="Barry K."/>
            <person name="Glavina del Rio T."/>
            <person name="Dalin E."/>
            <person name="Tice H."/>
            <person name="Pitluck S."/>
            <person name="Kiss H."/>
            <person name="Brettin T."/>
            <person name="Detter J.C."/>
            <person name="Bruce D."/>
            <person name="Han C."/>
            <person name="Schmutz J."/>
            <person name="Larimer F."/>
            <person name="Land M."/>
            <person name="Hauser L."/>
            <person name="Kyrpides N."/>
            <person name="Mikhailova N."/>
            <person name="Hersman L."/>
            <person name="Dubois J."/>
            <person name="Maurice P."/>
            <person name="Richardson P."/>
        </authorList>
    </citation>
    <scope>NUCLEOTIDE SEQUENCE [LARGE SCALE GENOMIC DNA]</scope>
    <source>
        <strain>ymp</strain>
    </source>
</reference>
<dbReference type="EMBL" id="CP000680">
    <property type="protein sequence ID" value="ABP87357.1"/>
    <property type="molecule type" value="Genomic_DNA"/>
</dbReference>
<dbReference type="SMR" id="A4Y191"/>
<dbReference type="STRING" id="399739.Pmen_4611"/>
<dbReference type="KEGG" id="pmy:Pmen_4611"/>
<dbReference type="PATRIC" id="fig|399739.8.peg.4676"/>
<dbReference type="eggNOG" id="COG0711">
    <property type="taxonomic scope" value="Bacteria"/>
</dbReference>
<dbReference type="HOGENOM" id="CLU_079215_4_5_6"/>
<dbReference type="OrthoDB" id="9788020at2"/>
<dbReference type="GO" id="GO:0005886">
    <property type="term" value="C:plasma membrane"/>
    <property type="evidence" value="ECO:0007669"/>
    <property type="project" value="UniProtKB-SubCell"/>
</dbReference>
<dbReference type="GO" id="GO:0045259">
    <property type="term" value="C:proton-transporting ATP synthase complex"/>
    <property type="evidence" value="ECO:0007669"/>
    <property type="project" value="UniProtKB-KW"/>
</dbReference>
<dbReference type="GO" id="GO:0046933">
    <property type="term" value="F:proton-transporting ATP synthase activity, rotational mechanism"/>
    <property type="evidence" value="ECO:0007669"/>
    <property type="project" value="UniProtKB-UniRule"/>
</dbReference>
<dbReference type="GO" id="GO:0046961">
    <property type="term" value="F:proton-transporting ATPase activity, rotational mechanism"/>
    <property type="evidence" value="ECO:0007669"/>
    <property type="project" value="TreeGrafter"/>
</dbReference>
<dbReference type="CDD" id="cd06503">
    <property type="entry name" value="ATP-synt_Fo_b"/>
    <property type="match status" value="1"/>
</dbReference>
<dbReference type="FunFam" id="1.20.5.620:FF:000001">
    <property type="entry name" value="ATP synthase subunit b"/>
    <property type="match status" value="1"/>
</dbReference>
<dbReference type="Gene3D" id="1.20.5.620">
    <property type="entry name" value="F1F0 ATP synthase subunit B, membrane domain"/>
    <property type="match status" value="1"/>
</dbReference>
<dbReference type="HAMAP" id="MF_01398">
    <property type="entry name" value="ATP_synth_b_bprime"/>
    <property type="match status" value="1"/>
</dbReference>
<dbReference type="InterPro" id="IPR028987">
    <property type="entry name" value="ATP_synth_B-like_membr_sf"/>
</dbReference>
<dbReference type="InterPro" id="IPR002146">
    <property type="entry name" value="ATP_synth_b/b'su_bac/chlpt"/>
</dbReference>
<dbReference type="InterPro" id="IPR005864">
    <property type="entry name" value="ATP_synth_F0_bsu_bac"/>
</dbReference>
<dbReference type="InterPro" id="IPR050059">
    <property type="entry name" value="ATP_synthase_B_chain"/>
</dbReference>
<dbReference type="NCBIfam" id="TIGR01144">
    <property type="entry name" value="ATP_synt_b"/>
    <property type="match status" value="1"/>
</dbReference>
<dbReference type="NCBIfam" id="NF004411">
    <property type="entry name" value="PRK05759.1-2"/>
    <property type="match status" value="1"/>
</dbReference>
<dbReference type="PANTHER" id="PTHR33445:SF1">
    <property type="entry name" value="ATP SYNTHASE SUBUNIT B"/>
    <property type="match status" value="1"/>
</dbReference>
<dbReference type="PANTHER" id="PTHR33445">
    <property type="entry name" value="ATP SYNTHASE SUBUNIT B', CHLOROPLASTIC"/>
    <property type="match status" value="1"/>
</dbReference>
<dbReference type="Pfam" id="PF00430">
    <property type="entry name" value="ATP-synt_B"/>
    <property type="match status" value="1"/>
</dbReference>
<dbReference type="SUPFAM" id="SSF81573">
    <property type="entry name" value="F1F0 ATP synthase subunit B, membrane domain"/>
    <property type="match status" value="1"/>
</dbReference>
<evidence type="ECO:0000255" key="1">
    <source>
        <dbReference type="HAMAP-Rule" id="MF_01398"/>
    </source>
</evidence>
<name>ATPF_ECTM1</name>
<accession>A4Y191</accession>
<keyword id="KW-0066">ATP synthesis</keyword>
<keyword id="KW-0997">Cell inner membrane</keyword>
<keyword id="KW-1003">Cell membrane</keyword>
<keyword id="KW-0138">CF(0)</keyword>
<keyword id="KW-0375">Hydrogen ion transport</keyword>
<keyword id="KW-0406">Ion transport</keyword>
<keyword id="KW-0472">Membrane</keyword>
<keyword id="KW-0812">Transmembrane</keyword>
<keyword id="KW-1133">Transmembrane helix</keyword>
<keyword id="KW-0813">Transport</keyword>
<proteinExistence type="inferred from homology"/>
<organism>
    <name type="scientific">Ectopseudomonas mendocina (strain ymp)</name>
    <name type="common">Pseudomonas mendocina</name>
    <dbReference type="NCBI Taxonomy" id="399739"/>
    <lineage>
        <taxon>Bacteria</taxon>
        <taxon>Pseudomonadati</taxon>
        <taxon>Pseudomonadota</taxon>
        <taxon>Gammaproteobacteria</taxon>
        <taxon>Pseudomonadales</taxon>
        <taxon>Pseudomonadaceae</taxon>
        <taxon>Ectopseudomonas</taxon>
    </lineage>
</organism>
<protein>
    <recommendedName>
        <fullName evidence="1">ATP synthase subunit b</fullName>
    </recommendedName>
    <alternativeName>
        <fullName evidence="1">ATP synthase F(0) sector subunit b</fullName>
    </alternativeName>
    <alternativeName>
        <fullName evidence="1">ATPase subunit I</fullName>
    </alternativeName>
    <alternativeName>
        <fullName evidence="1">F-type ATPase subunit b</fullName>
        <shortName evidence="1">F-ATPase subunit b</shortName>
    </alternativeName>
</protein>
<feature type="chain" id="PRO_0000368688" description="ATP synthase subunit b">
    <location>
        <begin position="1"/>
        <end position="156"/>
    </location>
</feature>
<feature type="transmembrane region" description="Helical" evidence="1">
    <location>
        <begin position="7"/>
        <end position="29"/>
    </location>
</feature>